<dbReference type="EMBL" id="DQ316772">
    <property type="protein sequence ID" value="ABC48232.1"/>
    <property type="molecule type" value="mRNA"/>
</dbReference>
<dbReference type="EMBL" id="DQ316773">
    <property type="protein sequence ID" value="ABC48233.1"/>
    <property type="molecule type" value="mRNA"/>
</dbReference>
<dbReference type="EMBL" id="DQ316774">
    <property type="protein sequence ID" value="ABC48234.1"/>
    <property type="molecule type" value="mRNA"/>
</dbReference>
<dbReference type="EMBL" id="AK006548">
    <property type="protein sequence ID" value="BAB24647.1"/>
    <property type="molecule type" value="mRNA"/>
</dbReference>
<dbReference type="EMBL" id="AK014934">
    <property type="protein sequence ID" value="BAB29626.1"/>
    <property type="molecule type" value="mRNA"/>
</dbReference>
<dbReference type="EMBL" id="AL773565">
    <property type="status" value="NOT_ANNOTATED_CDS"/>
    <property type="molecule type" value="Genomic_DNA"/>
</dbReference>
<dbReference type="CCDS" id="CCDS30327.1">
    <molecule id="Q9D9R7-3"/>
</dbReference>
<dbReference type="CCDS" id="CCDS53161.1">
    <molecule id="Q9D9R7-1"/>
</dbReference>
<dbReference type="CCDS" id="CCDS53162.1">
    <molecule id="Q9D9R7-2"/>
</dbReference>
<dbReference type="RefSeq" id="NP_001033705.2">
    <molecule id="Q9D9R7-1"/>
    <property type="nucleotide sequence ID" value="NM_001038616.2"/>
</dbReference>
<dbReference type="RefSeq" id="NP_081867.1">
    <molecule id="Q9D9R7-3"/>
    <property type="nucleotide sequence ID" value="NM_027591.3"/>
</dbReference>
<dbReference type="RefSeq" id="NP_083654.1">
    <molecule id="Q9D9R7-2"/>
    <property type="nucleotide sequence ID" value="NM_029378.2"/>
</dbReference>
<dbReference type="FunCoup" id="Q9D9R7">
    <property type="interactions" value="111"/>
</dbReference>
<dbReference type="STRING" id="10090.ENSMUSP00000033686"/>
<dbReference type="GlyGen" id="Q9D9R7">
    <property type="glycosylation" value="1 site"/>
</dbReference>
<dbReference type="iPTMnet" id="Q9D9R7"/>
<dbReference type="PaxDb" id="10090-ENSMUSP00000033686"/>
<dbReference type="ProteomicsDB" id="279789">
    <molecule id="Q9D9R7-3"/>
</dbReference>
<dbReference type="DNASU" id="70887"/>
<dbReference type="Ensembl" id="ENSMUST00000033686.2">
    <molecule id="Q9D9R7-3"/>
    <property type="protein sequence ID" value="ENSMUSP00000033686.2"/>
    <property type="gene ID" value="ENSMUSG00000031323.9"/>
</dbReference>
<dbReference type="Ensembl" id="ENSMUST00000120808.8">
    <molecule id="Q9D9R7-2"/>
    <property type="protein sequence ID" value="ENSMUSP00000112572.2"/>
    <property type="gene ID" value="ENSMUSG00000031323.9"/>
</dbReference>
<dbReference type="Ensembl" id="ENSMUST00000121197.8">
    <molecule id="Q9D9R7-1"/>
    <property type="protein sequence ID" value="ENSMUSP00000113569.2"/>
    <property type="gene ID" value="ENSMUSG00000031323.9"/>
</dbReference>
<dbReference type="GeneID" id="70887"/>
<dbReference type="KEGG" id="mmu:70887"/>
<dbReference type="UCSC" id="uc009tzc.2">
    <molecule id="Q9D9R7-2"/>
    <property type="organism name" value="mouse"/>
</dbReference>
<dbReference type="UCSC" id="uc009tze.2">
    <molecule id="Q9D9R7-1"/>
    <property type="organism name" value="mouse"/>
</dbReference>
<dbReference type="AGR" id="MGI:1918137"/>
<dbReference type="CTD" id="70887"/>
<dbReference type="MGI" id="MGI:1918137">
    <property type="gene designation" value="Dmrtc1a"/>
</dbReference>
<dbReference type="VEuPathDB" id="HostDB:ENSMUSG00000031323"/>
<dbReference type="eggNOG" id="KOG3815">
    <property type="taxonomic scope" value="Eukaryota"/>
</dbReference>
<dbReference type="GeneTree" id="ENSGT00940000156489"/>
<dbReference type="HOGENOM" id="CLU_050863_3_0_1"/>
<dbReference type="InParanoid" id="Q9D9R7"/>
<dbReference type="OrthoDB" id="9663956at2759"/>
<dbReference type="TreeFam" id="TF340713"/>
<dbReference type="BioGRID-ORCS" id="70887">
    <property type="hits" value="2 hits in 76 CRISPR screens"/>
</dbReference>
<dbReference type="PRO" id="PR:Q9D9R7"/>
<dbReference type="Proteomes" id="UP000000589">
    <property type="component" value="Chromosome X"/>
</dbReference>
<dbReference type="RNAct" id="Q9D9R7">
    <property type="molecule type" value="protein"/>
</dbReference>
<dbReference type="Bgee" id="ENSMUSG00000031323">
    <property type="expression patterns" value="Expressed in placenta labyrinth and 91 other cell types or tissues"/>
</dbReference>
<dbReference type="ExpressionAtlas" id="Q9D9R7">
    <property type="expression patterns" value="baseline and differential"/>
</dbReference>
<dbReference type="InterPro" id="IPR031577">
    <property type="entry name" value="DMRT-C1/C2_C"/>
</dbReference>
<dbReference type="Pfam" id="PF15791">
    <property type="entry name" value="DMRT-like"/>
    <property type="match status" value="1"/>
</dbReference>
<name>DMRTC_MOUSE</name>
<sequence>MVEEEVAKKYDSSFTAGKNTVQQIQAQVDTATQEESSQGPVLLNQHPETTSVPYTPETVGQQLMVSLPGEPHGTSAMPSMCPSLILQPCATTDPMLLQPQVMGPSASNQASVSATLEWQEMLEAAEALLALKNSSQTRHQPCGMPGTAGERGLQLANPSMPPRPTSSGSLPSGHLDCMSLLT</sequence>
<gene>
    <name type="primary">Dmrtc1</name>
    <name type="synonym">Dmrt8.1</name>
    <name type="synonym">Dmrtc1a</name>
</gene>
<proteinExistence type="evidence at protein level"/>
<keyword id="KW-0025">Alternative splicing</keyword>
<keyword id="KW-0597">Phosphoprotein</keyword>
<keyword id="KW-1185">Reference proteome</keyword>
<keyword id="KW-0804">Transcription</keyword>
<keyword id="KW-0805">Transcription regulation</keyword>
<comment type="alternative products">
    <event type="alternative splicing"/>
    <isoform>
        <id>Q9D9R7-1</id>
        <name>1</name>
        <name>isoform c</name>
        <sequence type="displayed"/>
    </isoform>
    <isoform>
        <id>Q9D9R7-2</id>
        <name>2</name>
        <name>isoform b</name>
        <sequence type="described" ref="VSP_019523 VSP_019524"/>
    </isoform>
    <isoform>
        <id>Q9D9R7-3</id>
        <name>3</name>
        <name>isoform a</name>
        <sequence type="described" ref="VSP_019522 VSP_019523 VSP_019524"/>
    </isoform>
</comment>
<comment type="tissue specificity">
    <text evidence="2">Expressed in Sertoli cells in male testis.</text>
</comment>
<comment type="developmental stage">
    <text>Detected in many tissues at 13.5 dpc.</text>
</comment>
<comment type="similarity">
    <text evidence="5">Belongs to the DMRT family.</text>
</comment>
<comment type="caution">
    <text evidence="5">Although related to other DMRT proteins, it does not contain a canonical DM DNA-binding domain.</text>
</comment>
<feature type="chain" id="PRO_0000244103" description="Doublesex- and mab-3-related transcription factor C1">
    <location>
        <begin position="1"/>
        <end position="182"/>
    </location>
</feature>
<feature type="region of interest" description="Disordered" evidence="1">
    <location>
        <begin position="26"/>
        <end position="48"/>
    </location>
</feature>
<feature type="region of interest" description="Disordered" evidence="1">
    <location>
        <begin position="136"/>
        <end position="174"/>
    </location>
</feature>
<feature type="compositionally biased region" description="Polar residues" evidence="1">
    <location>
        <begin position="26"/>
        <end position="39"/>
    </location>
</feature>
<feature type="splice variant" id="VSP_019522" description="In isoform 3." evidence="3 4">
    <original>MVEEEVAKKYDSSFTA</original>
    <variation>MQRSSGSREPRKDFSPVTTSKKEEATPLKRRLVERHKRTMAAAHPSHMHVKKLAVEEGVRT</variation>
    <location>
        <begin position="1"/>
        <end position="16"/>
    </location>
</feature>
<feature type="splice variant" id="VSP_019523" description="In isoform 2 and isoform 3." evidence="3 4">
    <original>GTAGERGLQLA</original>
    <variation>VKRELSGASRM</variation>
    <location>
        <begin position="146"/>
        <end position="156"/>
    </location>
</feature>
<feature type="splice variant" id="VSP_019524" description="In isoform 2 and isoform 3." evidence="3 4">
    <location>
        <begin position="157"/>
        <end position="182"/>
    </location>
</feature>
<feature type="sequence conflict" description="In Ref. 1; ABC48234 and 2; BAB24647." evidence="5" ref="1 2">
    <original>L</original>
    <variation>M</variation>
    <location>
        <position position="43"/>
    </location>
</feature>
<feature type="modified residue" description="Phosphoserine" evidence="6">
    <location sequence="Q9D9R7-3">
        <position position="15"/>
    </location>
</feature>
<accession>Q9D9R7</accession>
<accession>B1AX31</accession>
<accession>B1AX32</accession>
<accession>Q2PMY0</accession>
<accession>Q9D5U3</accession>
<evidence type="ECO:0000256" key="1">
    <source>
        <dbReference type="SAM" id="MobiDB-lite"/>
    </source>
</evidence>
<evidence type="ECO:0000269" key="2">
    <source>
    </source>
</evidence>
<evidence type="ECO:0000303" key="3">
    <source>
    </source>
</evidence>
<evidence type="ECO:0000303" key="4">
    <source>
    </source>
</evidence>
<evidence type="ECO:0000305" key="5"/>
<evidence type="ECO:0007744" key="6">
    <source>
    </source>
</evidence>
<reference key="1">
    <citation type="journal article" date="2006" name="Genomics">
        <title>Male-biased expression of X-chromosomal DM domain-less Dmrt8 genes in the mouse.</title>
        <authorList>
            <person name="Veith A.-M."/>
            <person name="Klattig J."/>
            <person name="Dettai A."/>
            <person name="Schmidt C."/>
            <person name="Englert C."/>
            <person name="Volff J.-N."/>
        </authorList>
    </citation>
    <scope>NUCLEOTIDE SEQUENCE [MRNA] (ISOFORMS 1; 2 AND 3)</scope>
    <scope>TISSUE SPECIFICITY</scope>
</reference>
<reference key="2">
    <citation type="journal article" date="2005" name="Science">
        <title>The transcriptional landscape of the mammalian genome.</title>
        <authorList>
            <person name="Carninci P."/>
            <person name="Kasukawa T."/>
            <person name="Katayama S."/>
            <person name="Gough J."/>
            <person name="Frith M.C."/>
            <person name="Maeda N."/>
            <person name="Oyama R."/>
            <person name="Ravasi T."/>
            <person name="Lenhard B."/>
            <person name="Wells C."/>
            <person name="Kodzius R."/>
            <person name="Shimokawa K."/>
            <person name="Bajic V.B."/>
            <person name="Brenner S.E."/>
            <person name="Batalov S."/>
            <person name="Forrest A.R."/>
            <person name="Zavolan M."/>
            <person name="Davis M.J."/>
            <person name="Wilming L.G."/>
            <person name="Aidinis V."/>
            <person name="Allen J.E."/>
            <person name="Ambesi-Impiombato A."/>
            <person name="Apweiler R."/>
            <person name="Aturaliya R.N."/>
            <person name="Bailey T.L."/>
            <person name="Bansal M."/>
            <person name="Baxter L."/>
            <person name="Beisel K.W."/>
            <person name="Bersano T."/>
            <person name="Bono H."/>
            <person name="Chalk A.M."/>
            <person name="Chiu K.P."/>
            <person name="Choudhary V."/>
            <person name="Christoffels A."/>
            <person name="Clutterbuck D.R."/>
            <person name="Crowe M.L."/>
            <person name="Dalla E."/>
            <person name="Dalrymple B.P."/>
            <person name="de Bono B."/>
            <person name="Della Gatta G."/>
            <person name="di Bernardo D."/>
            <person name="Down T."/>
            <person name="Engstrom P."/>
            <person name="Fagiolini M."/>
            <person name="Faulkner G."/>
            <person name="Fletcher C.F."/>
            <person name="Fukushima T."/>
            <person name="Furuno M."/>
            <person name="Futaki S."/>
            <person name="Gariboldi M."/>
            <person name="Georgii-Hemming P."/>
            <person name="Gingeras T.R."/>
            <person name="Gojobori T."/>
            <person name="Green R.E."/>
            <person name="Gustincich S."/>
            <person name="Harbers M."/>
            <person name="Hayashi Y."/>
            <person name="Hensch T.K."/>
            <person name="Hirokawa N."/>
            <person name="Hill D."/>
            <person name="Huminiecki L."/>
            <person name="Iacono M."/>
            <person name="Ikeo K."/>
            <person name="Iwama A."/>
            <person name="Ishikawa T."/>
            <person name="Jakt M."/>
            <person name="Kanapin A."/>
            <person name="Katoh M."/>
            <person name="Kawasawa Y."/>
            <person name="Kelso J."/>
            <person name="Kitamura H."/>
            <person name="Kitano H."/>
            <person name="Kollias G."/>
            <person name="Krishnan S.P."/>
            <person name="Kruger A."/>
            <person name="Kummerfeld S.K."/>
            <person name="Kurochkin I.V."/>
            <person name="Lareau L.F."/>
            <person name="Lazarevic D."/>
            <person name="Lipovich L."/>
            <person name="Liu J."/>
            <person name="Liuni S."/>
            <person name="McWilliam S."/>
            <person name="Madan Babu M."/>
            <person name="Madera M."/>
            <person name="Marchionni L."/>
            <person name="Matsuda H."/>
            <person name="Matsuzawa S."/>
            <person name="Miki H."/>
            <person name="Mignone F."/>
            <person name="Miyake S."/>
            <person name="Morris K."/>
            <person name="Mottagui-Tabar S."/>
            <person name="Mulder N."/>
            <person name="Nakano N."/>
            <person name="Nakauchi H."/>
            <person name="Ng P."/>
            <person name="Nilsson R."/>
            <person name="Nishiguchi S."/>
            <person name="Nishikawa S."/>
            <person name="Nori F."/>
            <person name="Ohara O."/>
            <person name="Okazaki Y."/>
            <person name="Orlando V."/>
            <person name="Pang K.C."/>
            <person name="Pavan W.J."/>
            <person name="Pavesi G."/>
            <person name="Pesole G."/>
            <person name="Petrovsky N."/>
            <person name="Piazza S."/>
            <person name="Reed J."/>
            <person name="Reid J.F."/>
            <person name="Ring B.Z."/>
            <person name="Ringwald M."/>
            <person name="Rost B."/>
            <person name="Ruan Y."/>
            <person name="Salzberg S.L."/>
            <person name="Sandelin A."/>
            <person name="Schneider C."/>
            <person name="Schoenbach C."/>
            <person name="Sekiguchi K."/>
            <person name="Semple C.A."/>
            <person name="Seno S."/>
            <person name="Sessa L."/>
            <person name="Sheng Y."/>
            <person name="Shibata Y."/>
            <person name="Shimada H."/>
            <person name="Shimada K."/>
            <person name="Silva D."/>
            <person name="Sinclair B."/>
            <person name="Sperling S."/>
            <person name="Stupka E."/>
            <person name="Sugiura K."/>
            <person name="Sultana R."/>
            <person name="Takenaka Y."/>
            <person name="Taki K."/>
            <person name="Tammoja K."/>
            <person name="Tan S.L."/>
            <person name="Tang S."/>
            <person name="Taylor M.S."/>
            <person name="Tegner J."/>
            <person name="Teichmann S.A."/>
            <person name="Ueda H.R."/>
            <person name="van Nimwegen E."/>
            <person name="Verardo R."/>
            <person name="Wei C.L."/>
            <person name="Yagi K."/>
            <person name="Yamanishi H."/>
            <person name="Zabarovsky E."/>
            <person name="Zhu S."/>
            <person name="Zimmer A."/>
            <person name="Hide W."/>
            <person name="Bult C."/>
            <person name="Grimmond S.M."/>
            <person name="Teasdale R.D."/>
            <person name="Liu E.T."/>
            <person name="Brusic V."/>
            <person name="Quackenbush J."/>
            <person name="Wahlestedt C."/>
            <person name="Mattick J.S."/>
            <person name="Hume D.A."/>
            <person name="Kai C."/>
            <person name="Sasaki D."/>
            <person name="Tomaru Y."/>
            <person name="Fukuda S."/>
            <person name="Kanamori-Katayama M."/>
            <person name="Suzuki M."/>
            <person name="Aoki J."/>
            <person name="Arakawa T."/>
            <person name="Iida J."/>
            <person name="Imamura K."/>
            <person name="Itoh M."/>
            <person name="Kato T."/>
            <person name="Kawaji H."/>
            <person name="Kawagashira N."/>
            <person name="Kawashima T."/>
            <person name="Kojima M."/>
            <person name="Kondo S."/>
            <person name="Konno H."/>
            <person name="Nakano K."/>
            <person name="Ninomiya N."/>
            <person name="Nishio T."/>
            <person name="Okada M."/>
            <person name="Plessy C."/>
            <person name="Shibata K."/>
            <person name="Shiraki T."/>
            <person name="Suzuki S."/>
            <person name="Tagami M."/>
            <person name="Waki K."/>
            <person name="Watahiki A."/>
            <person name="Okamura-Oho Y."/>
            <person name="Suzuki H."/>
            <person name="Kawai J."/>
            <person name="Hayashizaki Y."/>
        </authorList>
    </citation>
    <scope>NUCLEOTIDE SEQUENCE [LARGE SCALE MRNA] (ISOFORMS 1 AND 3)</scope>
    <source>
        <strain>C57BL/6J</strain>
        <tissue>Testis</tissue>
    </source>
</reference>
<reference key="3">
    <citation type="journal article" date="2009" name="PLoS Biol.">
        <title>Lineage-specific biology revealed by a finished genome assembly of the mouse.</title>
        <authorList>
            <person name="Church D.M."/>
            <person name="Goodstadt L."/>
            <person name="Hillier L.W."/>
            <person name="Zody M.C."/>
            <person name="Goldstein S."/>
            <person name="She X."/>
            <person name="Bult C.J."/>
            <person name="Agarwala R."/>
            <person name="Cherry J.L."/>
            <person name="DiCuccio M."/>
            <person name="Hlavina W."/>
            <person name="Kapustin Y."/>
            <person name="Meric P."/>
            <person name="Maglott D."/>
            <person name="Birtle Z."/>
            <person name="Marques A.C."/>
            <person name="Graves T."/>
            <person name="Zhou S."/>
            <person name="Teague B."/>
            <person name="Potamousis K."/>
            <person name="Churas C."/>
            <person name="Place M."/>
            <person name="Herschleb J."/>
            <person name="Runnheim R."/>
            <person name="Forrest D."/>
            <person name="Amos-Landgraf J."/>
            <person name="Schwartz D.C."/>
            <person name="Cheng Z."/>
            <person name="Lindblad-Toh K."/>
            <person name="Eichler E.E."/>
            <person name="Ponting C.P."/>
        </authorList>
    </citation>
    <scope>NUCLEOTIDE SEQUENCE [LARGE SCALE GENOMIC DNA]</scope>
    <source>
        <strain>C57BL/6J</strain>
    </source>
</reference>
<reference key="4">
    <citation type="journal article" date="2010" name="Cell">
        <title>A tissue-specific atlas of mouse protein phosphorylation and expression.</title>
        <authorList>
            <person name="Huttlin E.L."/>
            <person name="Jedrychowski M.P."/>
            <person name="Elias J.E."/>
            <person name="Goswami T."/>
            <person name="Rad R."/>
            <person name="Beausoleil S.A."/>
            <person name="Villen J."/>
            <person name="Haas W."/>
            <person name="Sowa M.E."/>
            <person name="Gygi S.P."/>
        </authorList>
    </citation>
    <scope>PHOSPHORYLATION [LARGE SCALE ANALYSIS] AT SER-15 (ISOFORM 3)</scope>
    <scope>IDENTIFICATION BY MASS SPECTROMETRY [LARGE SCALE ANALYSIS]</scope>
    <source>
        <tissue>Testis</tissue>
    </source>
</reference>
<protein>
    <recommendedName>
        <fullName>Doublesex- and mab-3-related transcription factor C1</fullName>
    </recommendedName>
    <alternativeName>
        <fullName>Doublesex- and mab-3-related transcription factor 8.1</fullName>
    </alternativeName>
</protein>
<organism>
    <name type="scientific">Mus musculus</name>
    <name type="common">Mouse</name>
    <dbReference type="NCBI Taxonomy" id="10090"/>
    <lineage>
        <taxon>Eukaryota</taxon>
        <taxon>Metazoa</taxon>
        <taxon>Chordata</taxon>
        <taxon>Craniata</taxon>
        <taxon>Vertebrata</taxon>
        <taxon>Euteleostomi</taxon>
        <taxon>Mammalia</taxon>
        <taxon>Eutheria</taxon>
        <taxon>Euarchontoglires</taxon>
        <taxon>Glires</taxon>
        <taxon>Rodentia</taxon>
        <taxon>Myomorpha</taxon>
        <taxon>Muroidea</taxon>
        <taxon>Muridae</taxon>
        <taxon>Murinae</taxon>
        <taxon>Mus</taxon>
        <taxon>Mus</taxon>
    </lineage>
</organism>